<name>RS4_PYRCJ</name>
<comment type="function">
    <text evidence="1">One of the primary rRNA binding proteins, it binds directly to 16S rRNA where it nucleates assembly of the body of the 30S subunit.</text>
</comment>
<comment type="function">
    <text evidence="1">With S5 and S12 plays an important role in translational accuracy.</text>
</comment>
<comment type="subunit">
    <text evidence="1">Part of the 30S ribosomal subunit. Contacts protein S5. The interaction surface between S4 and S5 is involved in control of translational fidelity.</text>
</comment>
<comment type="similarity">
    <text evidence="1">Belongs to the universal ribosomal protein uS4 family.</text>
</comment>
<proteinExistence type="evidence at protein level"/>
<gene>
    <name evidence="1" type="primary">rps4</name>
    <name type="ordered locus">Pcal_0971</name>
</gene>
<evidence type="ECO:0000255" key="1">
    <source>
        <dbReference type="HAMAP-Rule" id="MF_01306"/>
    </source>
</evidence>
<evidence type="ECO:0000305" key="2"/>
<feature type="chain" id="PRO_0000293411" description="Small ribosomal subunit protein uS4">
    <location>
        <begin position="1"/>
        <end position="159"/>
    </location>
</feature>
<feature type="domain" description="S4 RNA-binding" evidence="1">
    <location>
        <begin position="106"/>
        <end position="158"/>
    </location>
</feature>
<sequence>MGGLKKPKKKYLAGKPKKIWNKQLLLEELQLMGEYGLRNKKELWLARARLKWIVRRARALLSMTAEERAPLEVPFKEKLYKMGFIEDPNVPLDRILSLDVRAILERRLQTLVFRMGLAKSIHHARQLVVHGHVLVAGRRVTSPGFLVPRELEDKITIEQ</sequence>
<protein>
    <recommendedName>
        <fullName evidence="1">Small ribosomal subunit protein uS4</fullName>
    </recommendedName>
    <alternativeName>
        <fullName evidence="2">30S ribosomal protein S4</fullName>
    </alternativeName>
</protein>
<accession>A3MUS9</accession>
<organism>
    <name type="scientific">Pyrobaculum calidifontis (strain DSM 21063 / JCM 11548 / VA1)</name>
    <dbReference type="NCBI Taxonomy" id="410359"/>
    <lineage>
        <taxon>Archaea</taxon>
        <taxon>Thermoproteota</taxon>
        <taxon>Thermoprotei</taxon>
        <taxon>Thermoproteales</taxon>
        <taxon>Thermoproteaceae</taxon>
        <taxon>Pyrobaculum</taxon>
    </lineage>
</organism>
<keyword id="KW-0002">3D-structure</keyword>
<keyword id="KW-0687">Ribonucleoprotein</keyword>
<keyword id="KW-0689">Ribosomal protein</keyword>
<keyword id="KW-0694">RNA-binding</keyword>
<keyword id="KW-0699">rRNA-binding</keyword>
<dbReference type="EMBL" id="CP000561">
    <property type="protein sequence ID" value="ABO08396.1"/>
    <property type="molecule type" value="Genomic_DNA"/>
</dbReference>
<dbReference type="RefSeq" id="WP_011849654.1">
    <property type="nucleotide sequence ID" value="NC_009073.1"/>
</dbReference>
<dbReference type="PDB" id="9E71">
    <property type="method" value="EM"/>
    <property type="resolution" value="2.36 A"/>
    <property type="chains" value="BD=1-159"/>
</dbReference>
<dbReference type="PDB" id="9E7F">
    <property type="method" value="EM"/>
    <property type="resolution" value="2.53 A"/>
    <property type="chains" value="BD=1-159"/>
</dbReference>
<dbReference type="PDBsum" id="9E71"/>
<dbReference type="PDBsum" id="9E7F"/>
<dbReference type="EMDB" id="EMD-47628"/>
<dbReference type="EMDB" id="EMD-47668"/>
<dbReference type="SMR" id="A3MUS9"/>
<dbReference type="STRING" id="410359.Pcal_0971"/>
<dbReference type="GeneID" id="4908598"/>
<dbReference type="KEGG" id="pcl:Pcal_0971"/>
<dbReference type="eggNOG" id="arCOG04239">
    <property type="taxonomic scope" value="Archaea"/>
</dbReference>
<dbReference type="HOGENOM" id="CLU_089738_1_1_2"/>
<dbReference type="OrthoDB" id="10429at2157"/>
<dbReference type="Proteomes" id="UP000001431">
    <property type="component" value="Chromosome"/>
</dbReference>
<dbReference type="GO" id="GO:0015935">
    <property type="term" value="C:small ribosomal subunit"/>
    <property type="evidence" value="ECO:0007669"/>
    <property type="project" value="InterPro"/>
</dbReference>
<dbReference type="GO" id="GO:0019843">
    <property type="term" value="F:rRNA binding"/>
    <property type="evidence" value="ECO:0007669"/>
    <property type="project" value="UniProtKB-UniRule"/>
</dbReference>
<dbReference type="GO" id="GO:0003735">
    <property type="term" value="F:structural constituent of ribosome"/>
    <property type="evidence" value="ECO:0007669"/>
    <property type="project" value="InterPro"/>
</dbReference>
<dbReference type="GO" id="GO:0042274">
    <property type="term" value="P:ribosomal small subunit biogenesis"/>
    <property type="evidence" value="ECO:0007669"/>
    <property type="project" value="TreeGrafter"/>
</dbReference>
<dbReference type="GO" id="GO:0006412">
    <property type="term" value="P:translation"/>
    <property type="evidence" value="ECO:0007669"/>
    <property type="project" value="UniProtKB-UniRule"/>
</dbReference>
<dbReference type="CDD" id="cd00165">
    <property type="entry name" value="S4"/>
    <property type="match status" value="1"/>
</dbReference>
<dbReference type="Gene3D" id="3.10.290.10">
    <property type="entry name" value="RNA-binding S4 domain"/>
    <property type="match status" value="1"/>
</dbReference>
<dbReference type="HAMAP" id="MF_01306_A">
    <property type="entry name" value="Ribosomal_uS4_A"/>
    <property type="match status" value="1"/>
</dbReference>
<dbReference type="InterPro" id="IPR022801">
    <property type="entry name" value="Ribosomal_uS4"/>
</dbReference>
<dbReference type="InterPro" id="IPR022802">
    <property type="entry name" value="Ribosomal_uS4_arc"/>
</dbReference>
<dbReference type="InterPro" id="IPR018079">
    <property type="entry name" value="Ribosomal_uS4_CS"/>
</dbReference>
<dbReference type="InterPro" id="IPR005710">
    <property type="entry name" value="Ribosomal_uS4_euk/arc"/>
</dbReference>
<dbReference type="InterPro" id="IPR001912">
    <property type="entry name" value="Ribosomal_uS4_N"/>
</dbReference>
<dbReference type="InterPro" id="IPR002942">
    <property type="entry name" value="S4_RNA-bd"/>
</dbReference>
<dbReference type="InterPro" id="IPR036986">
    <property type="entry name" value="S4_RNA-bd_sf"/>
</dbReference>
<dbReference type="NCBIfam" id="NF003139">
    <property type="entry name" value="PRK04051.1"/>
    <property type="match status" value="1"/>
</dbReference>
<dbReference type="NCBIfam" id="TIGR01018">
    <property type="entry name" value="uS4_arch"/>
    <property type="match status" value="1"/>
</dbReference>
<dbReference type="PANTHER" id="PTHR11831">
    <property type="entry name" value="30S 40S RIBOSOMAL PROTEIN"/>
    <property type="match status" value="1"/>
</dbReference>
<dbReference type="PANTHER" id="PTHR11831:SF5">
    <property type="entry name" value="40S RIBOSOMAL PROTEIN S9"/>
    <property type="match status" value="1"/>
</dbReference>
<dbReference type="Pfam" id="PF01479">
    <property type="entry name" value="S4"/>
    <property type="match status" value="1"/>
</dbReference>
<dbReference type="SMART" id="SM01390">
    <property type="entry name" value="Ribosomal_S4"/>
    <property type="match status" value="1"/>
</dbReference>
<dbReference type="SMART" id="SM00363">
    <property type="entry name" value="S4"/>
    <property type="match status" value="1"/>
</dbReference>
<dbReference type="SUPFAM" id="SSF55174">
    <property type="entry name" value="Alpha-L RNA-binding motif"/>
    <property type="match status" value="1"/>
</dbReference>
<dbReference type="PROSITE" id="PS00632">
    <property type="entry name" value="RIBOSOMAL_S4"/>
    <property type="match status" value="1"/>
</dbReference>
<dbReference type="PROSITE" id="PS50889">
    <property type="entry name" value="S4"/>
    <property type="match status" value="1"/>
</dbReference>
<reference key="1">
    <citation type="submission" date="2007-02" db="EMBL/GenBank/DDBJ databases">
        <title>Complete sequence of Pyrobaculum calidifontis JCM 11548.</title>
        <authorList>
            <consortium name="US DOE Joint Genome Institute"/>
            <person name="Copeland A."/>
            <person name="Lucas S."/>
            <person name="Lapidus A."/>
            <person name="Barry K."/>
            <person name="Glavina del Rio T."/>
            <person name="Dalin E."/>
            <person name="Tice H."/>
            <person name="Pitluck S."/>
            <person name="Chain P."/>
            <person name="Malfatti S."/>
            <person name="Shin M."/>
            <person name="Vergez L."/>
            <person name="Schmutz J."/>
            <person name="Larimer F."/>
            <person name="Land M."/>
            <person name="Hauser L."/>
            <person name="Kyrpides N."/>
            <person name="Mikhailova N."/>
            <person name="Cozen A.E."/>
            <person name="Fitz-Gibbon S.T."/>
            <person name="House C.H."/>
            <person name="Saltikov C."/>
            <person name="Lowe T.M."/>
            <person name="Richardson P."/>
        </authorList>
    </citation>
    <scope>NUCLEOTIDE SEQUENCE [LARGE SCALE GENOMIC DNA]</scope>
    <source>
        <strain>DSM 21063 / JCM 11548 / VA1</strain>
    </source>
</reference>